<organism>
    <name type="scientific">Escherichia coli O6:K15:H31 (strain 536 / UPEC)</name>
    <dbReference type="NCBI Taxonomy" id="362663"/>
    <lineage>
        <taxon>Bacteria</taxon>
        <taxon>Pseudomonadati</taxon>
        <taxon>Pseudomonadota</taxon>
        <taxon>Gammaproteobacteria</taxon>
        <taxon>Enterobacterales</taxon>
        <taxon>Enterobacteriaceae</taxon>
        <taxon>Escherichia</taxon>
    </lineage>
</organism>
<comment type="function">
    <text evidence="1">Part of the Sec protein translocase complex. Interacts with the SecYEG preprotein conducting channel. Has a central role in coupling the hydrolysis of ATP to the transfer of proteins into and across the cell membrane, serving both as a receptor for the preprotein-SecB complex and as an ATP-driven molecular motor driving the stepwise translocation of polypeptide chains across the membrane.</text>
</comment>
<comment type="catalytic activity">
    <reaction evidence="1">
        <text>ATP + H2O + cellular proteinSide 1 = ADP + phosphate + cellular proteinSide 2.</text>
        <dbReference type="EC" id="7.4.2.8"/>
    </reaction>
</comment>
<comment type="cofactor">
    <cofactor evidence="1">
        <name>Zn(2+)</name>
        <dbReference type="ChEBI" id="CHEBI:29105"/>
    </cofactor>
    <text evidence="1">May bind 1 zinc ion per subunit.</text>
</comment>
<comment type="subunit">
    <text evidence="1">Monomer and homodimer. Part of the essential Sec protein translocation apparatus which comprises SecA, SecYEG and auxiliary proteins SecDF-YajC and YidC.</text>
</comment>
<comment type="subcellular location">
    <subcellularLocation>
        <location evidence="1">Cell inner membrane</location>
        <topology evidence="1">Peripheral membrane protein</topology>
        <orientation evidence="1">Cytoplasmic side</orientation>
    </subcellularLocation>
    <subcellularLocation>
        <location evidence="1">Cytoplasm</location>
    </subcellularLocation>
    <text evidence="1">Distribution is 50-50.</text>
</comment>
<comment type="induction">
    <text evidence="1">Repressed under conditions of excess protein secretion capacity and derepressed when protein secretion becomes limiting. This is regulated by SecM.</text>
</comment>
<comment type="similarity">
    <text evidence="1">Belongs to the SecA family.</text>
</comment>
<accession>Q0TLP1</accession>
<protein>
    <recommendedName>
        <fullName evidence="1">Protein translocase subunit SecA</fullName>
        <ecNumber evidence="1">7.4.2.8</ecNumber>
    </recommendedName>
</protein>
<feature type="chain" id="PRO_0000320809" description="Protein translocase subunit SecA">
    <location>
        <begin position="1"/>
        <end position="901"/>
    </location>
</feature>
<feature type="region of interest" description="Disordered" evidence="2">
    <location>
        <begin position="859"/>
        <end position="901"/>
    </location>
</feature>
<feature type="compositionally biased region" description="Basic residues" evidence="2">
    <location>
        <begin position="891"/>
        <end position="901"/>
    </location>
</feature>
<feature type="binding site" evidence="1">
    <location>
        <position position="87"/>
    </location>
    <ligand>
        <name>ATP</name>
        <dbReference type="ChEBI" id="CHEBI:30616"/>
    </ligand>
</feature>
<feature type="binding site" evidence="1">
    <location>
        <begin position="105"/>
        <end position="109"/>
    </location>
    <ligand>
        <name>ATP</name>
        <dbReference type="ChEBI" id="CHEBI:30616"/>
    </ligand>
</feature>
<feature type="binding site" evidence="1">
    <location>
        <position position="512"/>
    </location>
    <ligand>
        <name>ATP</name>
        <dbReference type="ChEBI" id="CHEBI:30616"/>
    </ligand>
</feature>
<feature type="binding site" evidence="1">
    <location>
        <position position="885"/>
    </location>
    <ligand>
        <name>Zn(2+)</name>
        <dbReference type="ChEBI" id="CHEBI:29105"/>
    </ligand>
</feature>
<feature type="binding site" evidence="1">
    <location>
        <position position="887"/>
    </location>
    <ligand>
        <name>Zn(2+)</name>
        <dbReference type="ChEBI" id="CHEBI:29105"/>
    </ligand>
</feature>
<feature type="binding site" evidence="1">
    <location>
        <position position="896"/>
    </location>
    <ligand>
        <name>Zn(2+)</name>
        <dbReference type="ChEBI" id="CHEBI:29105"/>
    </ligand>
</feature>
<feature type="binding site" evidence="1">
    <location>
        <position position="897"/>
    </location>
    <ligand>
        <name>Zn(2+)</name>
        <dbReference type="ChEBI" id="CHEBI:29105"/>
    </ligand>
</feature>
<proteinExistence type="inferred from homology"/>
<dbReference type="EC" id="7.4.2.8" evidence="1"/>
<dbReference type="EMBL" id="CP000247">
    <property type="protein sequence ID" value="ABG68140.1"/>
    <property type="molecule type" value="Genomic_DNA"/>
</dbReference>
<dbReference type="RefSeq" id="WP_000905803.1">
    <property type="nucleotide sequence ID" value="NC_008253.1"/>
</dbReference>
<dbReference type="SMR" id="Q0TLP1"/>
<dbReference type="KEGG" id="ecp:ECP_0100"/>
<dbReference type="HOGENOM" id="CLU_005314_3_0_6"/>
<dbReference type="Proteomes" id="UP000009182">
    <property type="component" value="Chromosome"/>
</dbReference>
<dbReference type="GO" id="GO:0031522">
    <property type="term" value="C:cell envelope Sec protein transport complex"/>
    <property type="evidence" value="ECO:0007669"/>
    <property type="project" value="TreeGrafter"/>
</dbReference>
<dbReference type="GO" id="GO:0005829">
    <property type="term" value="C:cytosol"/>
    <property type="evidence" value="ECO:0007669"/>
    <property type="project" value="TreeGrafter"/>
</dbReference>
<dbReference type="GO" id="GO:0005886">
    <property type="term" value="C:plasma membrane"/>
    <property type="evidence" value="ECO:0007669"/>
    <property type="project" value="UniProtKB-SubCell"/>
</dbReference>
<dbReference type="GO" id="GO:0005524">
    <property type="term" value="F:ATP binding"/>
    <property type="evidence" value="ECO:0007669"/>
    <property type="project" value="UniProtKB-UniRule"/>
</dbReference>
<dbReference type="GO" id="GO:0046872">
    <property type="term" value="F:metal ion binding"/>
    <property type="evidence" value="ECO:0007669"/>
    <property type="project" value="UniProtKB-KW"/>
</dbReference>
<dbReference type="GO" id="GO:0008564">
    <property type="term" value="F:protein-exporting ATPase activity"/>
    <property type="evidence" value="ECO:0007669"/>
    <property type="project" value="UniProtKB-EC"/>
</dbReference>
<dbReference type="GO" id="GO:0065002">
    <property type="term" value="P:intracellular protein transmembrane transport"/>
    <property type="evidence" value="ECO:0007669"/>
    <property type="project" value="UniProtKB-UniRule"/>
</dbReference>
<dbReference type="GO" id="GO:0017038">
    <property type="term" value="P:protein import"/>
    <property type="evidence" value="ECO:0007669"/>
    <property type="project" value="InterPro"/>
</dbReference>
<dbReference type="GO" id="GO:0006605">
    <property type="term" value="P:protein targeting"/>
    <property type="evidence" value="ECO:0007669"/>
    <property type="project" value="UniProtKB-UniRule"/>
</dbReference>
<dbReference type="GO" id="GO:0043952">
    <property type="term" value="P:protein transport by the Sec complex"/>
    <property type="evidence" value="ECO:0007669"/>
    <property type="project" value="TreeGrafter"/>
</dbReference>
<dbReference type="CDD" id="cd17928">
    <property type="entry name" value="DEXDc_SecA"/>
    <property type="match status" value="1"/>
</dbReference>
<dbReference type="CDD" id="cd18803">
    <property type="entry name" value="SF2_C_secA"/>
    <property type="match status" value="1"/>
</dbReference>
<dbReference type="FunFam" id="1.10.3060.10:FF:000001">
    <property type="entry name" value="Preprotein translocase subunit SecA"/>
    <property type="match status" value="1"/>
</dbReference>
<dbReference type="FunFam" id="3.40.50.300:FF:000081">
    <property type="entry name" value="Preprotein translocase subunit SecA"/>
    <property type="match status" value="1"/>
</dbReference>
<dbReference type="FunFam" id="3.40.50.300:FF:000113">
    <property type="entry name" value="Preprotein translocase subunit SecA"/>
    <property type="match status" value="1"/>
</dbReference>
<dbReference type="FunFam" id="3.90.1440.10:FF:000001">
    <property type="entry name" value="Preprotein translocase subunit SecA"/>
    <property type="match status" value="1"/>
</dbReference>
<dbReference type="Gene3D" id="1.10.3060.10">
    <property type="entry name" value="Helical scaffold and wing domains of SecA"/>
    <property type="match status" value="1"/>
</dbReference>
<dbReference type="Gene3D" id="3.40.50.300">
    <property type="entry name" value="P-loop containing nucleotide triphosphate hydrolases"/>
    <property type="match status" value="2"/>
</dbReference>
<dbReference type="Gene3D" id="3.90.1440.10">
    <property type="entry name" value="SecA, preprotein cross-linking domain"/>
    <property type="match status" value="1"/>
</dbReference>
<dbReference type="HAMAP" id="MF_01382">
    <property type="entry name" value="SecA"/>
    <property type="match status" value="1"/>
</dbReference>
<dbReference type="InterPro" id="IPR014001">
    <property type="entry name" value="Helicase_ATP-bd"/>
</dbReference>
<dbReference type="InterPro" id="IPR001650">
    <property type="entry name" value="Helicase_C-like"/>
</dbReference>
<dbReference type="InterPro" id="IPR027417">
    <property type="entry name" value="P-loop_NTPase"/>
</dbReference>
<dbReference type="InterPro" id="IPR004027">
    <property type="entry name" value="SEC_C_motif"/>
</dbReference>
<dbReference type="InterPro" id="IPR000185">
    <property type="entry name" value="SecA"/>
</dbReference>
<dbReference type="InterPro" id="IPR020937">
    <property type="entry name" value="SecA_CS"/>
</dbReference>
<dbReference type="InterPro" id="IPR011115">
    <property type="entry name" value="SecA_DEAD"/>
</dbReference>
<dbReference type="InterPro" id="IPR014018">
    <property type="entry name" value="SecA_motor_DEAD"/>
</dbReference>
<dbReference type="InterPro" id="IPR011130">
    <property type="entry name" value="SecA_preprotein_X-link_dom"/>
</dbReference>
<dbReference type="InterPro" id="IPR044722">
    <property type="entry name" value="SecA_SF2_C"/>
</dbReference>
<dbReference type="InterPro" id="IPR011116">
    <property type="entry name" value="SecA_Wing/Scaffold"/>
</dbReference>
<dbReference type="InterPro" id="IPR036266">
    <property type="entry name" value="SecA_Wing/Scaffold_sf"/>
</dbReference>
<dbReference type="InterPro" id="IPR036670">
    <property type="entry name" value="SecA_X-link_sf"/>
</dbReference>
<dbReference type="NCBIfam" id="NF009538">
    <property type="entry name" value="PRK12904.1"/>
    <property type="match status" value="1"/>
</dbReference>
<dbReference type="NCBIfam" id="TIGR00963">
    <property type="entry name" value="secA"/>
    <property type="match status" value="1"/>
</dbReference>
<dbReference type="PANTHER" id="PTHR30612:SF0">
    <property type="entry name" value="CHLOROPLAST PROTEIN-TRANSPORTING ATPASE"/>
    <property type="match status" value="1"/>
</dbReference>
<dbReference type="PANTHER" id="PTHR30612">
    <property type="entry name" value="SECA INNER MEMBRANE COMPONENT OF SEC PROTEIN SECRETION SYSTEM"/>
    <property type="match status" value="1"/>
</dbReference>
<dbReference type="Pfam" id="PF21090">
    <property type="entry name" value="P-loop_SecA"/>
    <property type="match status" value="1"/>
</dbReference>
<dbReference type="Pfam" id="PF02810">
    <property type="entry name" value="SEC-C"/>
    <property type="match status" value="1"/>
</dbReference>
<dbReference type="Pfam" id="PF07517">
    <property type="entry name" value="SecA_DEAD"/>
    <property type="match status" value="1"/>
</dbReference>
<dbReference type="Pfam" id="PF01043">
    <property type="entry name" value="SecA_PP_bind"/>
    <property type="match status" value="1"/>
</dbReference>
<dbReference type="Pfam" id="PF07516">
    <property type="entry name" value="SecA_SW"/>
    <property type="match status" value="1"/>
</dbReference>
<dbReference type="PRINTS" id="PR00906">
    <property type="entry name" value="SECA"/>
</dbReference>
<dbReference type="SMART" id="SM00957">
    <property type="entry name" value="SecA_DEAD"/>
    <property type="match status" value="1"/>
</dbReference>
<dbReference type="SMART" id="SM00958">
    <property type="entry name" value="SecA_PP_bind"/>
    <property type="match status" value="1"/>
</dbReference>
<dbReference type="SUPFAM" id="SSF81886">
    <property type="entry name" value="Helical scaffold and wing domains of SecA"/>
    <property type="match status" value="1"/>
</dbReference>
<dbReference type="SUPFAM" id="SSF52540">
    <property type="entry name" value="P-loop containing nucleoside triphosphate hydrolases"/>
    <property type="match status" value="2"/>
</dbReference>
<dbReference type="SUPFAM" id="SSF81767">
    <property type="entry name" value="Pre-protein crosslinking domain of SecA"/>
    <property type="match status" value="1"/>
</dbReference>
<dbReference type="PROSITE" id="PS01312">
    <property type="entry name" value="SECA"/>
    <property type="match status" value="1"/>
</dbReference>
<dbReference type="PROSITE" id="PS51196">
    <property type="entry name" value="SECA_MOTOR_DEAD"/>
    <property type="match status" value="1"/>
</dbReference>
<reference key="1">
    <citation type="journal article" date="2006" name="Mol. Microbiol.">
        <title>Role of pathogenicity island-associated integrases in the genome plasticity of uropathogenic Escherichia coli strain 536.</title>
        <authorList>
            <person name="Hochhut B."/>
            <person name="Wilde C."/>
            <person name="Balling G."/>
            <person name="Middendorf B."/>
            <person name="Dobrindt U."/>
            <person name="Brzuszkiewicz E."/>
            <person name="Gottschalk G."/>
            <person name="Carniel E."/>
            <person name="Hacker J."/>
        </authorList>
    </citation>
    <scope>NUCLEOTIDE SEQUENCE [LARGE SCALE GENOMIC DNA]</scope>
    <source>
        <strain>536 / UPEC</strain>
    </source>
</reference>
<name>SECA_ECOL5</name>
<evidence type="ECO:0000255" key="1">
    <source>
        <dbReference type="HAMAP-Rule" id="MF_01382"/>
    </source>
</evidence>
<evidence type="ECO:0000256" key="2">
    <source>
        <dbReference type="SAM" id="MobiDB-lite"/>
    </source>
</evidence>
<sequence length="901" mass="101993">MLIKLLTKVFGSRNDRTLRRMRKVVNIINAMEPEMEKLSDEELKGKTAEFRVRLEKGEVLENLIPEAFAVVREASKRVFGMRHFDVQLLGGMVLNERCIAEMRTGEGKTLTATLPAYLNALTGKGVHVVTVNDYLAQRDAENNRPLFEFLGLTVGINLPGMPAPAKREAYAADITYGTNNEYGFDYLRDNMAFSPEERVQRKLHYALVDEVDSILIDEARTPLIISGPAEDSSEMYKRVNKIIPHLIRQEKEDSETFQGEGHFSVDEKSRQVNLTERGLVLIEELLVKEGIMDEGESLYSPANIMLMHHVTAALRAHALFTRDVDYIVKDGEVIIVDEHTGRTMQGRRWSDGLHQAVEAKEGVQIQNENQTLASITFQNYFRLYEKLAGMTGTADTEAFEFSSIYKLDTVVVPTNRPMIRKDLPDLVYMTEAEKIQAIIEDIKERTAKGQPVLVGTISIEKSELVSNELTKAGIKHNVLNAKFHANEAAIVAQAGYPAAVTIATNMAGRGTDIVLGGSWQAEVAALENPTAEQIEKIKADWQVRHDAVLAAGGLHIIGTERHESRRIDNQLRGRSGRQGDAGSSRFYLSMEDALMRIFASDRVSGMMRKLGMKPGEAIEHPWVTKAIANAQRKVESRNFDIRKQLLEYDDVANDQRRAIYSQRNELLDVSDVSETINSIREDVFKATIDAYIPPQSLEEMWDIPGLQERLKNDFDLDLPIAEWLDKEPELHEETLRERILAQSIEVYQRKEEVVGAEMMRHFEKGVMLQTLDSLWKEHLAAMDYLRQGIHLRGYAQKDPKQEYKRESFSMFAAMLESLKYEVISTLSKVQVRMPEEVEELEQQRRMEAERLAQMQQLSHQDDDSAAAAALAAQTGERKVGRNDPCPCGSGKKYKQCHGRLQ</sequence>
<gene>
    <name evidence="1" type="primary">secA</name>
    <name type="ordered locus">ECP_0100</name>
</gene>
<keyword id="KW-0067">ATP-binding</keyword>
<keyword id="KW-0997">Cell inner membrane</keyword>
<keyword id="KW-1003">Cell membrane</keyword>
<keyword id="KW-0963">Cytoplasm</keyword>
<keyword id="KW-0472">Membrane</keyword>
<keyword id="KW-0479">Metal-binding</keyword>
<keyword id="KW-0547">Nucleotide-binding</keyword>
<keyword id="KW-0653">Protein transport</keyword>
<keyword id="KW-1278">Translocase</keyword>
<keyword id="KW-0811">Translocation</keyword>
<keyword id="KW-0813">Transport</keyword>
<keyword id="KW-0862">Zinc</keyword>